<keyword id="KW-0204">Cytolysis</keyword>
<keyword id="KW-1061">Dermonecrotic toxin</keyword>
<keyword id="KW-1015">Disulfide bond</keyword>
<keyword id="KW-0354">Hemolysis</keyword>
<keyword id="KW-0442">Lipid degradation</keyword>
<keyword id="KW-0443">Lipid metabolism</keyword>
<keyword id="KW-0456">Lyase</keyword>
<keyword id="KW-0460">Magnesium</keyword>
<keyword id="KW-0479">Metal-binding</keyword>
<keyword id="KW-0964">Secreted</keyword>
<keyword id="KW-0800">Toxin</keyword>
<proteinExistence type="evidence at transcript level"/>
<accession>C0JB84</accession>
<feature type="chain" id="PRO_0000392895" description="Dermonecrotic toxin SdSicTox-betaIIB1bx">
    <location>
        <begin position="1" status="less than"/>
        <end position="274"/>
    </location>
</feature>
<feature type="active site" evidence="5">
    <location>
        <position position="5"/>
    </location>
</feature>
<feature type="active site" description="Nucleophile" evidence="5">
    <location>
        <position position="41"/>
    </location>
</feature>
<feature type="binding site" evidence="5">
    <location>
        <position position="25"/>
    </location>
    <ligand>
        <name>Mg(2+)</name>
        <dbReference type="ChEBI" id="CHEBI:18420"/>
    </ligand>
</feature>
<feature type="binding site" evidence="5">
    <location>
        <position position="27"/>
    </location>
    <ligand>
        <name>Mg(2+)</name>
        <dbReference type="ChEBI" id="CHEBI:18420"/>
    </ligand>
</feature>
<feature type="binding site" evidence="5">
    <location>
        <position position="85"/>
    </location>
    <ligand>
        <name>Mg(2+)</name>
        <dbReference type="ChEBI" id="CHEBI:18420"/>
    </ligand>
</feature>
<feature type="disulfide bond" evidence="3">
    <location>
        <begin position="45"/>
        <end position="51"/>
    </location>
</feature>
<feature type="disulfide bond" evidence="3">
    <location>
        <begin position="47"/>
        <end position="190"/>
    </location>
</feature>
<feature type="non-terminal residue">
    <location>
        <position position="1"/>
    </location>
</feature>
<organism>
    <name type="scientific">Sicarius cf. damarensis (strain GJB-2008)</name>
    <name type="common">Six-eyed sand spider</name>
    <dbReference type="NCBI Taxonomy" id="575956"/>
    <lineage>
        <taxon>Eukaryota</taxon>
        <taxon>Metazoa</taxon>
        <taxon>Ecdysozoa</taxon>
        <taxon>Arthropoda</taxon>
        <taxon>Chelicerata</taxon>
        <taxon>Arachnida</taxon>
        <taxon>Araneae</taxon>
        <taxon>Araneomorphae</taxon>
        <taxon>Haplogynae</taxon>
        <taxon>Scytodoidea</taxon>
        <taxon>Sicariidae</taxon>
        <taxon>Sicarius</taxon>
    </lineage>
</organism>
<name>B2KBA_SICCD</name>
<evidence type="ECO:0000250" key="1">
    <source>
        <dbReference type="UniProtKB" id="A0A0D4WTV1"/>
    </source>
</evidence>
<evidence type="ECO:0000250" key="2">
    <source>
        <dbReference type="UniProtKB" id="A0A0D4WV12"/>
    </source>
</evidence>
<evidence type="ECO:0000250" key="3">
    <source>
        <dbReference type="UniProtKB" id="P0CE80"/>
    </source>
</evidence>
<evidence type="ECO:0000250" key="4">
    <source>
        <dbReference type="UniProtKB" id="Q4ZFU2"/>
    </source>
</evidence>
<evidence type="ECO:0000250" key="5">
    <source>
        <dbReference type="UniProtKB" id="Q8I914"/>
    </source>
</evidence>
<evidence type="ECO:0000303" key="6">
    <source>
    </source>
</evidence>
<evidence type="ECO:0000305" key="7"/>
<evidence type="ECO:0000305" key="8">
    <source>
    </source>
</evidence>
<sequence length="274" mass="31770">WIMGHMVNAIERVDEFLNLGANAIEFDIDFDKDGIAQITHHGIPCNCGRKCTKKAIFTEYLDNIRQVTTPDDPKFREQLVLLALDLKLLRISSAKAYRAGEDVAKKLLDHYWQRGNSRARAYILLNIPLVEDYEFIRAFKDTLKNEGYESYNDKVGINFTGNEDLDKIRDVLEILGIHKQVWQADGITSCFARGTERLKEALEKRDTPGYNYINKIYAWTLVRKSIMRRSLRLGVDGVMSNNPDRVIKVLKEKEFADKFRLATYNDNPWEKFRG</sequence>
<dbReference type="EC" id="4.6.1.-" evidence="4"/>
<dbReference type="EMBL" id="FJ171519">
    <property type="protein sequence ID" value="ACN49015.1"/>
    <property type="molecule type" value="mRNA"/>
</dbReference>
<dbReference type="SMR" id="C0JB84"/>
<dbReference type="GO" id="GO:0005576">
    <property type="term" value="C:extracellular region"/>
    <property type="evidence" value="ECO:0007669"/>
    <property type="project" value="UniProtKB-SubCell"/>
</dbReference>
<dbReference type="GO" id="GO:0016829">
    <property type="term" value="F:lyase activity"/>
    <property type="evidence" value="ECO:0007669"/>
    <property type="project" value="UniProtKB-KW"/>
</dbReference>
<dbReference type="GO" id="GO:0046872">
    <property type="term" value="F:metal ion binding"/>
    <property type="evidence" value="ECO:0007669"/>
    <property type="project" value="UniProtKB-KW"/>
</dbReference>
<dbReference type="GO" id="GO:0008081">
    <property type="term" value="F:phosphoric diester hydrolase activity"/>
    <property type="evidence" value="ECO:0007669"/>
    <property type="project" value="InterPro"/>
</dbReference>
<dbReference type="GO" id="GO:0090729">
    <property type="term" value="F:toxin activity"/>
    <property type="evidence" value="ECO:0007669"/>
    <property type="project" value="UniProtKB-KW"/>
</dbReference>
<dbReference type="GO" id="GO:0031640">
    <property type="term" value="P:killing of cells of another organism"/>
    <property type="evidence" value="ECO:0007669"/>
    <property type="project" value="UniProtKB-KW"/>
</dbReference>
<dbReference type="GO" id="GO:0016042">
    <property type="term" value="P:lipid catabolic process"/>
    <property type="evidence" value="ECO:0007669"/>
    <property type="project" value="UniProtKB-KW"/>
</dbReference>
<dbReference type="CDD" id="cd08576">
    <property type="entry name" value="GDPD_like_SMaseD_PLD"/>
    <property type="match status" value="1"/>
</dbReference>
<dbReference type="Gene3D" id="3.20.20.190">
    <property type="entry name" value="Phosphatidylinositol (PI) phosphodiesterase"/>
    <property type="match status" value="1"/>
</dbReference>
<dbReference type="InterPro" id="IPR017946">
    <property type="entry name" value="PLC-like_Pdiesterase_TIM-brl"/>
</dbReference>
<dbReference type="SUPFAM" id="SSF51695">
    <property type="entry name" value="PLC-like phosphodiesterases"/>
    <property type="match status" value="1"/>
</dbReference>
<reference key="1">
    <citation type="journal article" date="2009" name="Mol. Biol. Evol.">
        <title>Molecular evolution, functional variation, and proposed nomenclature of the gene family that includes sphingomyelinase D in sicariid spider venoms.</title>
        <authorList>
            <person name="Binford G.J."/>
            <person name="Bodner M.R."/>
            <person name="Cordes M.H."/>
            <person name="Baldwin K.L."/>
            <person name="Rynerson M.R."/>
            <person name="Burns S.N."/>
            <person name="Zobel-Thropp P.A."/>
        </authorList>
    </citation>
    <scope>NUCLEOTIDE SEQUENCE [MRNA]</scope>
    <scope>NOMENCLATURE</scope>
    <source>
        <tissue>Venom gland</tissue>
    </source>
</reference>
<comment type="function">
    <text evidence="1 3">Dermonecrotic toxins cleave the phosphodiester linkage between the phosphate and headgroup of certain phospholipids (sphingolipid and lysolipid substrates), forming an alcohol (often choline) and a cyclic phosphate (By similarity). This toxin acts on sphingomyelin (SM) (By similarity). It may also act on ceramide phosphoethanolamine (CPE), lysophosphatidylcholine (LPC) and lysophosphatidylethanolamine (LPE), but not on lysophosphatidylserine (LPS), and lysophosphatidylglycerol (LPG) (By similarity). It acts by transphosphatidylation, releasing exclusively cyclic phosphate products as second products (By similarity). Induces dermonecrosis, hemolysis, increased vascular permeability, edema, inflammatory response, and platelet aggregation (By similarity).</text>
</comment>
<comment type="catalytic activity">
    <reaction evidence="1">
        <text>an N-(acyl)-sphingosylphosphocholine = an N-(acyl)-sphingosyl-1,3-cyclic phosphate + choline</text>
        <dbReference type="Rhea" id="RHEA:60652"/>
        <dbReference type="ChEBI" id="CHEBI:15354"/>
        <dbReference type="ChEBI" id="CHEBI:64583"/>
        <dbReference type="ChEBI" id="CHEBI:143892"/>
    </reaction>
</comment>
<comment type="catalytic activity">
    <reaction evidence="1">
        <text>an N-(acyl)-sphingosylphosphoethanolamine = an N-(acyl)-sphingosyl-1,3-cyclic phosphate + ethanolamine</text>
        <dbReference type="Rhea" id="RHEA:60648"/>
        <dbReference type="ChEBI" id="CHEBI:57603"/>
        <dbReference type="ChEBI" id="CHEBI:143891"/>
        <dbReference type="ChEBI" id="CHEBI:143892"/>
    </reaction>
</comment>
<comment type="catalytic activity">
    <reaction evidence="1">
        <text>a 1-acyl-sn-glycero-3-phosphocholine = a 1-acyl-sn-glycero-2,3-cyclic phosphate + choline</text>
        <dbReference type="Rhea" id="RHEA:60700"/>
        <dbReference type="ChEBI" id="CHEBI:15354"/>
        <dbReference type="ChEBI" id="CHEBI:58168"/>
        <dbReference type="ChEBI" id="CHEBI:143947"/>
    </reaction>
</comment>
<comment type="catalytic activity">
    <reaction evidence="1">
        <text>a 1-acyl-sn-glycero-3-phosphoethanolamine = a 1-acyl-sn-glycero-2,3-cyclic phosphate + ethanolamine</text>
        <dbReference type="Rhea" id="RHEA:60704"/>
        <dbReference type="ChEBI" id="CHEBI:57603"/>
        <dbReference type="ChEBI" id="CHEBI:64381"/>
        <dbReference type="ChEBI" id="CHEBI:143947"/>
    </reaction>
</comment>
<comment type="cofactor">
    <cofactor evidence="5">
        <name>Mg(2+)</name>
        <dbReference type="ChEBI" id="CHEBI:18420"/>
    </cofactor>
    <text evidence="5">Binds 1 Mg(2+) ion per subunit.</text>
</comment>
<comment type="subcellular location">
    <subcellularLocation>
        <location evidence="8">Secreted</location>
    </subcellularLocation>
</comment>
<comment type="tissue specificity">
    <text evidence="8">Expressed by the venom gland.</text>
</comment>
<comment type="similarity">
    <text evidence="7">Belongs to the arthropod phospholipase D family. Class II subfamily.</text>
</comment>
<comment type="caution">
    <text evidence="1 2 4">The most common activity assay for dermonecrotic toxins detects enzymatic activity by monitoring choline release from substrate. Liberation of choline from sphingomyelin (SM) or lysophosphatidylcholine (LPC) is commonly assumed to result from substrate hydrolysis, giving either ceramide-1-phosphate (C1P) or lysophosphatidic acid (LPA), respectively, as a second product. However, two studies from Lajoie and colleagues (2013 and 2015) report the observation of exclusive formation of cyclic phosphate products as second products, resulting from intramolecular transphosphatidylation. Cyclic phosphates have vastly different biological properties from their monoester counterparts, and they may be relevant to the pathology of brown spider envenomation.</text>
</comment>
<protein>
    <recommendedName>
        <fullName evidence="6">Dermonecrotic toxin SdSicTox-betaIIB1bx</fullName>
        <ecNumber evidence="4">4.6.1.-</ecNumber>
    </recommendedName>
    <alternativeName>
        <fullName>Phospholipase D</fullName>
        <shortName>PLD</shortName>
    </alternativeName>
    <alternativeName>
        <fullName>Sphingomyelin phosphodiesterase D</fullName>
        <shortName>SMD</shortName>
        <shortName>SMase D</shortName>
        <shortName>Sphingomyelinase D</shortName>
    </alternativeName>
</protein>